<name>GLPG_ECODH</name>
<proteinExistence type="inferred from homology"/>
<sequence length="276" mass="31307">MLMITSFANPRVAQAFVDYMATQGVILTIQQHNQSDVWLADESQAERVRAELARFLENPADPRYLAASWQAGHTGSGLHYRRYPFFAALRERAGPVTWVMMIACVVVFIAMQILGDQEVMLWLAWPFDPTLKFEFWRYFTHALMHFSLMHILFNLLWWWYLGGAVEKRLGSGKLIVITLISALLSGYVQQKFSGPWFGGLSGVVYALMGYVWLRGERDPQSGIYLQRGLIIFALIWIVAGWFDLFGMSMANGAHIAGLAVGLAMAFVDSLNARKRK</sequence>
<organism>
    <name type="scientific">Escherichia coli (strain K12 / DH10B)</name>
    <dbReference type="NCBI Taxonomy" id="316385"/>
    <lineage>
        <taxon>Bacteria</taxon>
        <taxon>Pseudomonadati</taxon>
        <taxon>Pseudomonadota</taxon>
        <taxon>Gammaproteobacteria</taxon>
        <taxon>Enterobacterales</taxon>
        <taxon>Enterobacteriaceae</taxon>
        <taxon>Escherichia</taxon>
    </lineage>
</organism>
<dbReference type="EC" id="3.4.21.105" evidence="1"/>
<dbReference type="EMBL" id="CP000948">
    <property type="protein sequence ID" value="ACB04481.1"/>
    <property type="molecule type" value="Genomic_DNA"/>
</dbReference>
<dbReference type="RefSeq" id="WP_000928723.1">
    <property type="nucleotide sequence ID" value="NC_010473.1"/>
</dbReference>
<dbReference type="SMR" id="B1X769"/>
<dbReference type="MEROPS" id="S54.016"/>
<dbReference type="GeneID" id="86862178"/>
<dbReference type="KEGG" id="ecd:ECDH10B_3598"/>
<dbReference type="HOGENOM" id="CLU_058989_0_0_6"/>
<dbReference type="GO" id="GO:0005886">
    <property type="term" value="C:plasma membrane"/>
    <property type="evidence" value="ECO:0007669"/>
    <property type="project" value="UniProtKB-SubCell"/>
</dbReference>
<dbReference type="GO" id="GO:0004252">
    <property type="term" value="F:serine-type endopeptidase activity"/>
    <property type="evidence" value="ECO:0007669"/>
    <property type="project" value="UniProtKB-UniRule"/>
</dbReference>
<dbReference type="GO" id="GO:0006508">
    <property type="term" value="P:proteolysis"/>
    <property type="evidence" value="ECO:0007669"/>
    <property type="project" value="UniProtKB-UniRule"/>
</dbReference>
<dbReference type="FunFam" id="1.20.1540.10:FF:000003">
    <property type="entry name" value="Rhomboid protease GlpG"/>
    <property type="match status" value="1"/>
</dbReference>
<dbReference type="FunFam" id="3.30.70.2350:FF:000001">
    <property type="entry name" value="Rhomboid protease GlpG"/>
    <property type="match status" value="1"/>
</dbReference>
<dbReference type="Gene3D" id="3.30.70.2350">
    <property type="match status" value="1"/>
</dbReference>
<dbReference type="Gene3D" id="1.20.1540.10">
    <property type="entry name" value="Rhomboid-like"/>
    <property type="match status" value="1"/>
</dbReference>
<dbReference type="HAMAP" id="MF_01594">
    <property type="entry name" value="Rhomboid_GlpG"/>
    <property type="match status" value="1"/>
</dbReference>
<dbReference type="InterPro" id="IPR038236">
    <property type="entry name" value="GlpG_N_sf"/>
</dbReference>
<dbReference type="InterPro" id="IPR022732">
    <property type="entry name" value="Peptidase_S54_GlpG_N"/>
</dbReference>
<dbReference type="InterPro" id="IPR022764">
    <property type="entry name" value="Peptidase_S54_rhomboid_dom"/>
</dbReference>
<dbReference type="InterPro" id="IPR035952">
    <property type="entry name" value="Rhomboid-like_sf"/>
</dbReference>
<dbReference type="InterPro" id="IPR023662">
    <property type="entry name" value="Rhomboid_protease_GlpG"/>
</dbReference>
<dbReference type="NCBIfam" id="NF008155">
    <property type="entry name" value="PRK10907.1"/>
    <property type="match status" value="1"/>
</dbReference>
<dbReference type="NCBIfam" id="TIGR04239">
    <property type="entry name" value="rhombo_GlpG"/>
    <property type="match status" value="1"/>
</dbReference>
<dbReference type="PANTHER" id="PTHR43066:SF26">
    <property type="entry name" value="RHOMBOID PROTEASE GLPG"/>
    <property type="match status" value="1"/>
</dbReference>
<dbReference type="PANTHER" id="PTHR43066">
    <property type="entry name" value="RHOMBOID-RELATED PROTEIN"/>
    <property type="match status" value="1"/>
</dbReference>
<dbReference type="Pfam" id="PF01694">
    <property type="entry name" value="Rhomboid"/>
    <property type="match status" value="1"/>
</dbReference>
<dbReference type="Pfam" id="PF12122">
    <property type="entry name" value="Rhomboid_N"/>
    <property type="match status" value="1"/>
</dbReference>
<dbReference type="SUPFAM" id="SSF144091">
    <property type="entry name" value="Rhomboid-like"/>
    <property type="match status" value="1"/>
</dbReference>
<protein>
    <recommendedName>
        <fullName evidence="1">Rhomboid protease GlpG</fullName>
        <ecNumber evidence="1">3.4.21.105</ecNumber>
    </recommendedName>
    <alternativeName>
        <fullName evidence="1">Intramembrane serine protease</fullName>
    </alternativeName>
</protein>
<comment type="function">
    <text evidence="1">Rhomboid-type serine protease that catalyzes intramembrane proteolysis.</text>
</comment>
<comment type="catalytic activity">
    <reaction evidence="1">
        <text>Cleaves type-1 transmembrane domains using a catalytic dyad composed of serine and histidine that are contributed by different transmembrane domains.</text>
        <dbReference type="EC" id="3.4.21.105"/>
    </reaction>
</comment>
<comment type="subcellular location">
    <subcellularLocation>
        <location evidence="1">Cell inner membrane</location>
        <topology evidence="1">Multi-pass membrane protein</topology>
    </subcellularLocation>
</comment>
<comment type="similarity">
    <text evidence="1">Belongs to the peptidase S54 family.</text>
</comment>
<keyword id="KW-0997">Cell inner membrane</keyword>
<keyword id="KW-1003">Cell membrane</keyword>
<keyword id="KW-0378">Hydrolase</keyword>
<keyword id="KW-0472">Membrane</keyword>
<keyword id="KW-0645">Protease</keyword>
<keyword id="KW-0720">Serine protease</keyword>
<keyword id="KW-0812">Transmembrane</keyword>
<keyword id="KW-1133">Transmembrane helix</keyword>
<evidence type="ECO:0000255" key="1">
    <source>
        <dbReference type="HAMAP-Rule" id="MF_01594"/>
    </source>
</evidence>
<reference key="1">
    <citation type="journal article" date="2008" name="J. Bacteriol.">
        <title>The complete genome sequence of Escherichia coli DH10B: insights into the biology of a laboratory workhorse.</title>
        <authorList>
            <person name="Durfee T."/>
            <person name="Nelson R."/>
            <person name="Baldwin S."/>
            <person name="Plunkett G. III"/>
            <person name="Burland V."/>
            <person name="Mau B."/>
            <person name="Petrosino J.F."/>
            <person name="Qin X."/>
            <person name="Muzny D.M."/>
            <person name="Ayele M."/>
            <person name="Gibbs R.A."/>
            <person name="Csorgo B."/>
            <person name="Posfai G."/>
            <person name="Weinstock G.M."/>
            <person name="Blattner F.R."/>
        </authorList>
    </citation>
    <scope>NUCLEOTIDE SEQUENCE [LARGE SCALE GENOMIC DNA]</scope>
    <source>
        <strain>K12 / DH10B</strain>
    </source>
</reference>
<gene>
    <name evidence="1" type="primary">glpG</name>
    <name type="ordered locus">ECDH10B_3598</name>
</gene>
<accession>B1X769</accession>
<feature type="chain" id="PRO_1000147856" description="Rhomboid protease GlpG">
    <location>
        <begin position="1"/>
        <end position="276"/>
    </location>
</feature>
<feature type="transmembrane region" description="Helical" evidence="1">
    <location>
        <begin position="94"/>
        <end position="114"/>
    </location>
</feature>
<feature type="transmembrane region" description="Helical" evidence="1">
    <location>
        <begin position="142"/>
        <end position="162"/>
    </location>
</feature>
<feature type="transmembrane region" description="Helical" evidence="1">
    <location>
        <begin position="169"/>
        <end position="189"/>
    </location>
</feature>
<feature type="transmembrane region" description="Helical" evidence="1">
    <location>
        <begin position="192"/>
        <end position="212"/>
    </location>
</feature>
<feature type="transmembrane region" description="Helical" evidence="1">
    <location>
        <begin position="229"/>
        <end position="249"/>
    </location>
</feature>
<feature type="transmembrane region" description="Helical" evidence="1">
    <location>
        <begin position="250"/>
        <end position="270"/>
    </location>
</feature>
<feature type="active site" description="Nucleophile" evidence="1">
    <location>
        <position position="201"/>
    </location>
</feature>
<feature type="active site" evidence="1">
    <location>
        <position position="254"/>
    </location>
</feature>